<dbReference type="EMBL" id="CR857239">
    <property type="protein sequence ID" value="CAH89536.1"/>
    <property type="molecule type" value="mRNA"/>
</dbReference>
<dbReference type="RefSeq" id="NP_001124667.1">
    <property type="nucleotide sequence ID" value="NM_001131195.1"/>
</dbReference>
<dbReference type="SMR" id="Q5RFC1"/>
<dbReference type="FunCoup" id="Q5RFC1">
    <property type="interactions" value="400"/>
</dbReference>
<dbReference type="STRING" id="9601.ENSPPYP00000015709"/>
<dbReference type="GeneID" id="100171512"/>
<dbReference type="KEGG" id="pon:100171512"/>
<dbReference type="CTD" id="54918"/>
<dbReference type="eggNOG" id="KOG4788">
    <property type="taxonomic scope" value="Eukaryota"/>
</dbReference>
<dbReference type="InParanoid" id="Q5RFC1"/>
<dbReference type="OrthoDB" id="10028364at2759"/>
<dbReference type="Proteomes" id="UP000001595">
    <property type="component" value="Unplaced"/>
</dbReference>
<dbReference type="GO" id="GO:0031901">
    <property type="term" value="C:early endosome membrane"/>
    <property type="evidence" value="ECO:0000250"/>
    <property type="project" value="UniProtKB"/>
</dbReference>
<dbReference type="GO" id="GO:0005886">
    <property type="term" value="C:plasma membrane"/>
    <property type="evidence" value="ECO:0000250"/>
    <property type="project" value="UniProtKB"/>
</dbReference>
<dbReference type="GO" id="GO:0055038">
    <property type="term" value="C:recycling endosome membrane"/>
    <property type="evidence" value="ECO:0000250"/>
    <property type="project" value="UniProtKB"/>
</dbReference>
<dbReference type="GO" id="GO:0032456">
    <property type="term" value="P:endocytic recycling"/>
    <property type="evidence" value="ECO:0000250"/>
    <property type="project" value="UniProtKB"/>
</dbReference>
<dbReference type="GO" id="GO:0015031">
    <property type="term" value="P:protein transport"/>
    <property type="evidence" value="ECO:0000250"/>
    <property type="project" value="UniProtKB"/>
</dbReference>
<dbReference type="GO" id="GO:0031647">
    <property type="term" value="P:regulation of protein stability"/>
    <property type="evidence" value="ECO:0000250"/>
    <property type="project" value="UniProtKB"/>
</dbReference>
<dbReference type="InterPro" id="IPR008253">
    <property type="entry name" value="Marvel"/>
</dbReference>
<dbReference type="InterPro" id="IPR050578">
    <property type="entry name" value="MARVEL-CKLF_proteins"/>
</dbReference>
<dbReference type="PANTHER" id="PTHR22776:SF25">
    <property type="entry name" value="CKLF-LIKE MARVEL TRANSMEMBRANE DOMAIN-CONTAINING PROTEIN 6"/>
    <property type="match status" value="1"/>
</dbReference>
<dbReference type="PANTHER" id="PTHR22776">
    <property type="entry name" value="MARVEL-CONTAINING POTENTIAL LIPID RAFT-ASSOCIATED PROTEIN"/>
    <property type="match status" value="1"/>
</dbReference>
<dbReference type="Pfam" id="PF01284">
    <property type="entry name" value="MARVEL"/>
    <property type="match status" value="1"/>
</dbReference>
<dbReference type="PROSITE" id="PS51225">
    <property type="entry name" value="MARVEL"/>
    <property type="match status" value="1"/>
</dbReference>
<accession>Q5RFC1</accession>
<keyword id="KW-0007">Acetylation</keyword>
<keyword id="KW-1003">Cell membrane</keyword>
<keyword id="KW-0967">Endosome</keyword>
<keyword id="KW-0472">Membrane</keyword>
<keyword id="KW-0597">Phosphoprotein</keyword>
<keyword id="KW-1185">Reference proteome</keyword>
<keyword id="KW-0812">Transmembrane</keyword>
<keyword id="KW-1133">Transmembrane helix</keyword>
<keyword id="KW-0813">Transport</keyword>
<proteinExistence type="evidence at transcript level"/>
<feature type="chain" id="PRO_0000186109" description="CKLF-like MARVEL transmembrane domain-containing protein 6">
    <location>
        <begin position="1"/>
        <end position="183"/>
    </location>
</feature>
<feature type="topological domain" description="Cytoplasmic" evidence="5">
    <location>
        <begin position="1"/>
        <end position="39"/>
    </location>
</feature>
<feature type="transmembrane region" description="Helical" evidence="2">
    <location>
        <begin position="40"/>
        <end position="60"/>
    </location>
</feature>
<feature type="topological domain" description="Extracellular" evidence="5">
    <location>
        <begin position="61"/>
        <end position="67"/>
    </location>
</feature>
<feature type="transmembrane region" description="Helical" evidence="2">
    <location>
        <begin position="68"/>
        <end position="88"/>
    </location>
</feature>
<feature type="topological domain" description="Cytoplasmic" evidence="5">
    <location>
        <begin position="89"/>
        <end position="106"/>
    </location>
</feature>
<feature type="transmembrane region" description="Helical" evidence="2">
    <location>
        <begin position="107"/>
        <end position="127"/>
    </location>
</feature>
<feature type="topological domain" description="Extracellular" evidence="5">
    <location>
        <begin position="128"/>
        <end position="134"/>
    </location>
</feature>
<feature type="transmembrane region" description="Helical" evidence="2">
    <location>
        <begin position="135"/>
        <end position="155"/>
    </location>
</feature>
<feature type="topological domain" description="Cytoplasmic" evidence="5">
    <location>
        <begin position="156"/>
        <end position="183"/>
    </location>
</feature>
<feature type="domain" description="MARVEL" evidence="3">
    <location>
        <begin position="33"/>
        <end position="160"/>
    </location>
</feature>
<feature type="region of interest" description="Disordered" evidence="4">
    <location>
        <begin position="1"/>
        <end position="20"/>
    </location>
</feature>
<feature type="modified residue" description="N-acetylmethionine" evidence="1">
    <location>
        <position position="1"/>
    </location>
</feature>
<feature type="modified residue" description="Phosphoserine" evidence="1">
    <location>
        <position position="8"/>
    </location>
</feature>
<feature type="modified residue" description="Phosphothreonine" evidence="1">
    <location>
        <position position="171"/>
    </location>
</feature>
<evidence type="ECO:0000250" key="1">
    <source>
        <dbReference type="UniProtKB" id="Q9NX76"/>
    </source>
</evidence>
<evidence type="ECO:0000255" key="2"/>
<evidence type="ECO:0000255" key="3">
    <source>
        <dbReference type="PROSITE-ProRule" id="PRU00581"/>
    </source>
</evidence>
<evidence type="ECO:0000256" key="4">
    <source>
        <dbReference type="SAM" id="MobiDB-lite"/>
    </source>
</evidence>
<evidence type="ECO:0000305" key="5"/>
<organism>
    <name type="scientific">Pongo abelii</name>
    <name type="common">Sumatran orangutan</name>
    <name type="synonym">Pongo pygmaeus abelii</name>
    <dbReference type="NCBI Taxonomy" id="9601"/>
    <lineage>
        <taxon>Eukaryota</taxon>
        <taxon>Metazoa</taxon>
        <taxon>Chordata</taxon>
        <taxon>Craniata</taxon>
        <taxon>Vertebrata</taxon>
        <taxon>Euteleostomi</taxon>
        <taxon>Mammalia</taxon>
        <taxon>Eutheria</taxon>
        <taxon>Euarchontoglires</taxon>
        <taxon>Primates</taxon>
        <taxon>Haplorrhini</taxon>
        <taxon>Catarrhini</taxon>
        <taxon>Hominidae</taxon>
        <taxon>Pongo</taxon>
    </lineage>
</organism>
<gene>
    <name type="primary">CMTM6</name>
    <name type="synonym">CKLFSF6</name>
</gene>
<sequence>MENGAVYSPTTEEDPGPARGPRSGLAAYCFLGRLPLLRRVLKGLQLSLSLLAFICEEVVSQCTLCGGLYFFEFVSCSAFLLSLLILIVYCTPFYERVDTTKVKSSDFYITLGTGCVFLLASIIFVSTHDRTSAEIAAIVFGFIASFMFLLDFVTMLYEKRQESQLRKSENTTRAEALTEPLNA</sequence>
<protein>
    <recommendedName>
        <fullName>CKLF-like MARVEL transmembrane domain-containing protein 6</fullName>
    </recommendedName>
    <alternativeName>
        <fullName>Chemokine-like factor superfamily member 6</fullName>
    </alternativeName>
</protein>
<comment type="function">
    <text evidence="1">Master regulator of recycling and plasma membrane expression of PD-L1/CD274, an immune inhibitory ligand critical for immune tolerance to self and antitumor immunity. Associates with both constitutive and IFNG-induced PD-L1/CD274 at recycling endosomes, where it protects PD-L1/CD274 from being targeted for lysosomal degradation, likely by preventing its ubiquitination. May stabilize PD-L1/CD274 expression on antigen presenting cells and potentiates inhibitory signaling by PDCD1/CD279, its receptor on T-cells, ultimately triggering T-cell anergy.</text>
</comment>
<comment type="subunit">
    <text evidence="1">Interacts with PD-L1/CD274 (via transmembrane domain); the interaction is direct. Interacts with CMTM4. Interacts with CD58, ARG1, ENO1 and TMPO.</text>
</comment>
<comment type="subcellular location">
    <subcellularLocation>
        <location evidence="1">Cell membrane</location>
        <topology evidence="2">Multi-pass membrane protein</topology>
    </subcellularLocation>
    <subcellularLocation>
        <location evidence="1">Early endosome membrane</location>
        <topology evidence="2">Multi-pass membrane protein</topology>
    </subcellularLocation>
    <subcellularLocation>
        <location evidence="1">Recycling endosome membrane</location>
    </subcellularLocation>
    <text evidence="1">Co-localizes with PD-L1/CD274 in the plasma membrane and in recycling endosomes.</text>
</comment>
<comment type="similarity">
    <text evidence="5">Belongs to the chemokine-like factor family.</text>
</comment>
<name>CKLF6_PONAB</name>
<reference key="1">
    <citation type="submission" date="2004-11" db="EMBL/GenBank/DDBJ databases">
        <authorList>
            <consortium name="The German cDNA consortium"/>
        </authorList>
    </citation>
    <scope>NUCLEOTIDE SEQUENCE [LARGE SCALE MRNA]</scope>
    <source>
        <tissue>Kidney</tissue>
    </source>
</reference>